<gene>
    <name evidence="1" type="primary">ileS</name>
    <name type="ordered locus">Nther_1320</name>
</gene>
<dbReference type="EC" id="6.1.1.5" evidence="1"/>
<dbReference type="EMBL" id="CP001034">
    <property type="protein sequence ID" value="ACB84903.1"/>
    <property type="molecule type" value="Genomic_DNA"/>
</dbReference>
<dbReference type="RefSeq" id="WP_012447778.1">
    <property type="nucleotide sequence ID" value="NC_010718.1"/>
</dbReference>
<dbReference type="SMR" id="B2A2I8"/>
<dbReference type="FunCoup" id="B2A2I8">
    <property type="interactions" value="417"/>
</dbReference>
<dbReference type="STRING" id="457570.Nther_1320"/>
<dbReference type="KEGG" id="nth:Nther_1320"/>
<dbReference type="eggNOG" id="COG0060">
    <property type="taxonomic scope" value="Bacteria"/>
</dbReference>
<dbReference type="HOGENOM" id="CLU_001493_7_0_9"/>
<dbReference type="InParanoid" id="B2A2I8"/>
<dbReference type="OrthoDB" id="9810365at2"/>
<dbReference type="Proteomes" id="UP000001683">
    <property type="component" value="Chromosome"/>
</dbReference>
<dbReference type="GO" id="GO:0005829">
    <property type="term" value="C:cytosol"/>
    <property type="evidence" value="ECO:0007669"/>
    <property type="project" value="TreeGrafter"/>
</dbReference>
<dbReference type="GO" id="GO:0002161">
    <property type="term" value="F:aminoacyl-tRNA deacylase activity"/>
    <property type="evidence" value="ECO:0007669"/>
    <property type="project" value="InterPro"/>
</dbReference>
<dbReference type="GO" id="GO:0005524">
    <property type="term" value="F:ATP binding"/>
    <property type="evidence" value="ECO:0007669"/>
    <property type="project" value="UniProtKB-UniRule"/>
</dbReference>
<dbReference type="GO" id="GO:0004822">
    <property type="term" value="F:isoleucine-tRNA ligase activity"/>
    <property type="evidence" value="ECO:0007669"/>
    <property type="project" value="UniProtKB-UniRule"/>
</dbReference>
<dbReference type="GO" id="GO:0000049">
    <property type="term" value="F:tRNA binding"/>
    <property type="evidence" value="ECO:0007669"/>
    <property type="project" value="InterPro"/>
</dbReference>
<dbReference type="GO" id="GO:0008270">
    <property type="term" value="F:zinc ion binding"/>
    <property type="evidence" value="ECO:0007669"/>
    <property type="project" value="UniProtKB-UniRule"/>
</dbReference>
<dbReference type="GO" id="GO:0006428">
    <property type="term" value="P:isoleucyl-tRNA aminoacylation"/>
    <property type="evidence" value="ECO:0007669"/>
    <property type="project" value="UniProtKB-UniRule"/>
</dbReference>
<dbReference type="CDD" id="cd07960">
    <property type="entry name" value="Anticodon_Ia_Ile_BEm"/>
    <property type="match status" value="1"/>
</dbReference>
<dbReference type="CDD" id="cd00818">
    <property type="entry name" value="IleRS_core"/>
    <property type="match status" value="1"/>
</dbReference>
<dbReference type="FunFam" id="1.10.730.20:FF:000001">
    <property type="entry name" value="Isoleucine--tRNA ligase"/>
    <property type="match status" value="1"/>
</dbReference>
<dbReference type="FunFam" id="3.40.50.620:FF:000152">
    <property type="entry name" value="Isoleucine--tRNA ligase"/>
    <property type="match status" value="1"/>
</dbReference>
<dbReference type="Gene3D" id="1.10.730.20">
    <property type="match status" value="1"/>
</dbReference>
<dbReference type="Gene3D" id="3.40.50.620">
    <property type="entry name" value="HUPs"/>
    <property type="match status" value="2"/>
</dbReference>
<dbReference type="Gene3D" id="1.10.10.830">
    <property type="entry name" value="Ile-tRNA synthetase CP2 domain-like"/>
    <property type="match status" value="1"/>
</dbReference>
<dbReference type="Gene3D" id="3.90.740.10">
    <property type="entry name" value="Valyl/Leucyl/Isoleucyl-tRNA synthetase, editing domain"/>
    <property type="match status" value="1"/>
</dbReference>
<dbReference type="HAMAP" id="MF_02002">
    <property type="entry name" value="Ile_tRNA_synth_type1"/>
    <property type="match status" value="1"/>
</dbReference>
<dbReference type="InterPro" id="IPR001412">
    <property type="entry name" value="aa-tRNA-synth_I_CS"/>
</dbReference>
<dbReference type="InterPro" id="IPR002300">
    <property type="entry name" value="aa-tRNA-synth_Ia"/>
</dbReference>
<dbReference type="InterPro" id="IPR033708">
    <property type="entry name" value="Anticodon_Ile_BEm"/>
</dbReference>
<dbReference type="InterPro" id="IPR002301">
    <property type="entry name" value="Ile-tRNA-ligase"/>
</dbReference>
<dbReference type="InterPro" id="IPR023585">
    <property type="entry name" value="Ile-tRNA-ligase_type1"/>
</dbReference>
<dbReference type="InterPro" id="IPR050081">
    <property type="entry name" value="Ile-tRNA_ligase"/>
</dbReference>
<dbReference type="InterPro" id="IPR013155">
    <property type="entry name" value="M/V/L/I-tRNA-synth_anticd-bd"/>
</dbReference>
<dbReference type="InterPro" id="IPR014729">
    <property type="entry name" value="Rossmann-like_a/b/a_fold"/>
</dbReference>
<dbReference type="InterPro" id="IPR009080">
    <property type="entry name" value="tRNAsynth_Ia_anticodon-bd"/>
</dbReference>
<dbReference type="InterPro" id="IPR009008">
    <property type="entry name" value="Val/Leu/Ile-tRNA-synth_edit"/>
</dbReference>
<dbReference type="InterPro" id="IPR010663">
    <property type="entry name" value="Znf_FPG/IleRS"/>
</dbReference>
<dbReference type="NCBIfam" id="TIGR00392">
    <property type="entry name" value="ileS"/>
    <property type="match status" value="1"/>
</dbReference>
<dbReference type="PANTHER" id="PTHR42765:SF1">
    <property type="entry name" value="ISOLEUCINE--TRNA LIGASE, MITOCHONDRIAL"/>
    <property type="match status" value="1"/>
</dbReference>
<dbReference type="PANTHER" id="PTHR42765">
    <property type="entry name" value="SOLEUCYL-TRNA SYNTHETASE"/>
    <property type="match status" value="1"/>
</dbReference>
<dbReference type="Pfam" id="PF08264">
    <property type="entry name" value="Anticodon_1"/>
    <property type="match status" value="1"/>
</dbReference>
<dbReference type="Pfam" id="PF00133">
    <property type="entry name" value="tRNA-synt_1"/>
    <property type="match status" value="1"/>
</dbReference>
<dbReference type="Pfam" id="PF06827">
    <property type="entry name" value="zf-FPG_IleRS"/>
    <property type="match status" value="1"/>
</dbReference>
<dbReference type="PRINTS" id="PR00984">
    <property type="entry name" value="TRNASYNTHILE"/>
</dbReference>
<dbReference type="SUPFAM" id="SSF47323">
    <property type="entry name" value="Anticodon-binding domain of a subclass of class I aminoacyl-tRNA synthetases"/>
    <property type="match status" value="1"/>
</dbReference>
<dbReference type="SUPFAM" id="SSF52374">
    <property type="entry name" value="Nucleotidylyl transferase"/>
    <property type="match status" value="1"/>
</dbReference>
<dbReference type="SUPFAM" id="SSF50677">
    <property type="entry name" value="ValRS/IleRS/LeuRS editing domain"/>
    <property type="match status" value="1"/>
</dbReference>
<dbReference type="PROSITE" id="PS00178">
    <property type="entry name" value="AA_TRNA_LIGASE_I"/>
    <property type="match status" value="1"/>
</dbReference>
<sequence length="926" mass="106964">MNYKDTLNLPKTDFPMKAKLPSREPEFLQEWESNNLYQRVQQKRSGKPKYILHDGPPYANGNIHMGHALNKVLKDIVVKFKTMQGYDSPYVPGWDTHGLPIEHQITKTEKVDRKSMSDVEFRKKCHDYAMKYVEIQKEEFKRLGVRGDWDNPYLTLSPEFEAEQVKLFGEMAQKGYIYKGLKPVYWCTDCETALAEAEVEYHDKRSPSIYVGFHVKDSKGEFNEEGVEFIIWTTTPWTIPANMAIALHPEFQYSLIKSGEKHYIVATDLLETVAEEAKLGEYQIIREYTGRELEGIVCQHPLFDSRESLVILGDHVTLEQGTGCVHTAPGHGHEDYEVAQKYDLEVLSPLNDSGVFTEEAGQFQGLYYDKANKEITQALDKRGALLSLSFITHQYPCCWRCKESVIFRATEQWFASVDGFRQDALKAIEDVDWIPAWGEERIKAMVMNRGDWCISRQRVWGVPLPIFYCQECGHELITEESISAVAELFRQEGSDAWFEKEAPEILPQGIQCSCGAKKFSKETDIMDVWFDSGSTHRGVCAQRQELAWPVDLYLEGSDQYRGWFQSSLLTAVATKGESPYRECLTNGWVVDGEGKKMSKSQGNVIAPQDITNQYGADILRLWVASSEFKQDVRVSQKILKQTAEAYRKIRNTARFILGNLYDFTPEKDYVSFDQLEEIDSYILCRLQKVIDQATRAYDEFEFHEFYHLIHNFCVVELSQFYLDVIKDRIYTMPTESRERRAAQTTMYYLLDSLVKMLAPVLTFTSEEIWQYLPGDREESIQLTDWPEVNEELVDNELEQKWANFLEFRKEVAKALENARKDKKIGSSLESKILIYADEDLFKKLQSFEDNLEELFIVSQVELKKAEQLTETVKNQALSSEDVEQASIIIEAAQGEKCPRCWNYHPEVTKAEELCPRCSHVLETSNK</sequence>
<evidence type="ECO:0000255" key="1">
    <source>
        <dbReference type="HAMAP-Rule" id="MF_02002"/>
    </source>
</evidence>
<reference key="1">
    <citation type="submission" date="2008-04" db="EMBL/GenBank/DDBJ databases">
        <title>Complete sequence of chromosome of Natranaerobius thermophilus JW/NM-WN-LF.</title>
        <authorList>
            <consortium name="US DOE Joint Genome Institute"/>
            <person name="Copeland A."/>
            <person name="Lucas S."/>
            <person name="Lapidus A."/>
            <person name="Glavina del Rio T."/>
            <person name="Dalin E."/>
            <person name="Tice H."/>
            <person name="Bruce D."/>
            <person name="Goodwin L."/>
            <person name="Pitluck S."/>
            <person name="Chertkov O."/>
            <person name="Brettin T."/>
            <person name="Detter J.C."/>
            <person name="Han C."/>
            <person name="Kuske C.R."/>
            <person name="Schmutz J."/>
            <person name="Larimer F."/>
            <person name="Land M."/>
            <person name="Hauser L."/>
            <person name="Kyrpides N."/>
            <person name="Lykidis A."/>
            <person name="Mesbah N.M."/>
            <person name="Wiegel J."/>
        </authorList>
    </citation>
    <scope>NUCLEOTIDE SEQUENCE [LARGE SCALE GENOMIC DNA]</scope>
    <source>
        <strain>ATCC BAA-1301 / DSM 18059 / JW/NM-WN-LF</strain>
    </source>
</reference>
<protein>
    <recommendedName>
        <fullName evidence="1">Isoleucine--tRNA ligase</fullName>
        <ecNumber evidence="1">6.1.1.5</ecNumber>
    </recommendedName>
    <alternativeName>
        <fullName evidence="1">Isoleucyl-tRNA synthetase</fullName>
        <shortName evidence="1">IleRS</shortName>
    </alternativeName>
</protein>
<comment type="function">
    <text evidence="1">Catalyzes the attachment of isoleucine to tRNA(Ile). As IleRS can inadvertently accommodate and process structurally similar amino acids such as valine, to avoid such errors it has two additional distinct tRNA(Ile)-dependent editing activities. One activity is designated as 'pretransfer' editing and involves the hydrolysis of activated Val-AMP. The other activity is designated 'posttransfer' editing and involves deacylation of mischarged Val-tRNA(Ile).</text>
</comment>
<comment type="catalytic activity">
    <reaction evidence="1">
        <text>tRNA(Ile) + L-isoleucine + ATP = L-isoleucyl-tRNA(Ile) + AMP + diphosphate</text>
        <dbReference type="Rhea" id="RHEA:11060"/>
        <dbReference type="Rhea" id="RHEA-COMP:9666"/>
        <dbReference type="Rhea" id="RHEA-COMP:9695"/>
        <dbReference type="ChEBI" id="CHEBI:30616"/>
        <dbReference type="ChEBI" id="CHEBI:33019"/>
        <dbReference type="ChEBI" id="CHEBI:58045"/>
        <dbReference type="ChEBI" id="CHEBI:78442"/>
        <dbReference type="ChEBI" id="CHEBI:78528"/>
        <dbReference type="ChEBI" id="CHEBI:456215"/>
        <dbReference type="EC" id="6.1.1.5"/>
    </reaction>
</comment>
<comment type="cofactor">
    <cofactor evidence="1">
        <name>Zn(2+)</name>
        <dbReference type="ChEBI" id="CHEBI:29105"/>
    </cofactor>
    <text evidence="1">Binds 1 zinc ion per subunit.</text>
</comment>
<comment type="subunit">
    <text evidence="1">Monomer.</text>
</comment>
<comment type="subcellular location">
    <subcellularLocation>
        <location evidence="1">Cytoplasm</location>
    </subcellularLocation>
</comment>
<comment type="domain">
    <text evidence="1">IleRS has two distinct active sites: one for aminoacylation and one for editing. The misactivated valine is translocated from the active site to the editing site, which sterically excludes the correctly activated isoleucine. The single editing site contains two valyl binding pockets, one specific for each substrate (Val-AMP or Val-tRNA(Ile)).</text>
</comment>
<comment type="similarity">
    <text evidence="1">Belongs to the class-I aminoacyl-tRNA synthetase family. IleS type 1 subfamily.</text>
</comment>
<accession>B2A2I8</accession>
<name>SYI_NATTJ</name>
<keyword id="KW-0030">Aminoacyl-tRNA synthetase</keyword>
<keyword id="KW-0067">ATP-binding</keyword>
<keyword id="KW-0963">Cytoplasm</keyword>
<keyword id="KW-0436">Ligase</keyword>
<keyword id="KW-0479">Metal-binding</keyword>
<keyword id="KW-0547">Nucleotide-binding</keyword>
<keyword id="KW-0648">Protein biosynthesis</keyword>
<keyword id="KW-1185">Reference proteome</keyword>
<keyword id="KW-0862">Zinc</keyword>
<organism>
    <name type="scientific">Natranaerobius thermophilus (strain ATCC BAA-1301 / DSM 18059 / JW/NM-WN-LF)</name>
    <dbReference type="NCBI Taxonomy" id="457570"/>
    <lineage>
        <taxon>Bacteria</taxon>
        <taxon>Bacillati</taxon>
        <taxon>Bacillota</taxon>
        <taxon>Clostridia</taxon>
        <taxon>Natranaerobiales</taxon>
        <taxon>Natranaerobiaceae</taxon>
        <taxon>Natranaerobius</taxon>
    </lineage>
</organism>
<proteinExistence type="inferred from homology"/>
<feature type="chain" id="PRO_1000189182" description="Isoleucine--tRNA ligase">
    <location>
        <begin position="1"/>
        <end position="926"/>
    </location>
</feature>
<feature type="short sequence motif" description="'HIGH' region">
    <location>
        <begin position="57"/>
        <end position="67"/>
    </location>
</feature>
<feature type="short sequence motif" description="'KMSKS' region">
    <location>
        <begin position="596"/>
        <end position="600"/>
    </location>
</feature>
<feature type="binding site" evidence="1">
    <location>
        <position position="555"/>
    </location>
    <ligand>
        <name>L-isoleucyl-5'-AMP</name>
        <dbReference type="ChEBI" id="CHEBI:178002"/>
    </ligand>
</feature>
<feature type="binding site" evidence="1">
    <location>
        <position position="599"/>
    </location>
    <ligand>
        <name>ATP</name>
        <dbReference type="ChEBI" id="CHEBI:30616"/>
    </ligand>
</feature>
<feature type="binding site" evidence="1">
    <location>
        <position position="897"/>
    </location>
    <ligand>
        <name>Zn(2+)</name>
        <dbReference type="ChEBI" id="CHEBI:29105"/>
    </ligand>
</feature>
<feature type="binding site" evidence="1">
    <location>
        <position position="900"/>
    </location>
    <ligand>
        <name>Zn(2+)</name>
        <dbReference type="ChEBI" id="CHEBI:29105"/>
    </ligand>
</feature>
<feature type="binding site" evidence="1">
    <location>
        <position position="914"/>
    </location>
    <ligand>
        <name>Zn(2+)</name>
        <dbReference type="ChEBI" id="CHEBI:29105"/>
    </ligand>
</feature>
<feature type="binding site" evidence="1">
    <location>
        <position position="917"/>
    </location>
    <ligand>
        <name>Zn(2+)</name>
        <dbReference type="ChEBI" id="CHEBI:29105"/>
    </ligand>
</feature>